<reference key="1">
    <citation type="submission" date="2005-03" db="EMBL/GenBank/DDBJ databases">
        <title>Annotation of the Saccharomyces cerevisiae RM11-1a genome.</title>
        <authorList>
            <consortium name="The Broad Institute Genome Sequencing Platform"/>
            <person name="Birren B.W."/>
            <person name="Lander E.S."/>
            <person name="Galagan J.E."/>
            <person name="Nusbaum C."/>
            <person name="Devon K."/>
            <person name="Cuomo C."/>
            <person name="Jaffe D.B."/>
            <person name="Butler J."/>
            <person name="Alvarez P."/>
            <person name="Gnerre S."/>
            <person name="Grabherr M."/>
            <person name="Kleber M."/>
            <person name="Mauceli E.W."/>
            <person name="Brockman W."/>
            <person name="MacCallum I.A."/>
            <person name="Rounsley S."/>
            <person name="Young S.K."/>
            <person name="LaButti K."/>
            <person name="Pushparaj V."/>
            <person name="DeCaprio D."/>
            <person name="Crawford M."/>
            <person name="Koehrsen M."/>
            <person name="Engels R."/>
            <person name="Montgomery P."/>
            <person name="Pearson M."/>
            <person name="Howarth C."/>
            <person name="Larson L."/>
            <person name="Luoma S."/>
            <person name="White J."/>
            <person name="O'Leary S."/>
            <person name="Kodira C.D."/>
            <person name="Zeng Q."/>
            <person name="Yandava C."/>
            <person name="Alvarado L."/>
            <person name="Pratt S."/>
            <person name="Kruglyak L."/>
        </authorList>
    </citation>
    <scope>NUCLEOTIDE SEQUENCE [LARGE SCALE GENOMIC DNA]</scope>
    <source>
        <strain>RM11-1a</strain>
    </source>
</reference>
<sequence length="494" mass="56841">MTNWQQQLPLTDTQKNELDKSVLRYLNWNYKQTVRHEHAQDYESVRHAIVTLSGFLLQESVDRQEFISNNDTSNESMVDIDELLLPKKWNSIVRLQKKIIELEQNTETLVSQIKDLNTQVSELAQFKPTTSNGASAHNVLKWIPRNLPSCLINVESSVTSVKLHPNLPIVFVATDHGKLYAFDLFNYTIPLASLQSHTKAITSMDVLFTNFTNSSKKNYLVVVTASKDLQIHVFKWVSEECKFQQIRSLLGHEHIVSAVKIWQKNNDVHIASCSRDQTVKIWDFHNGWSLKTFQPHSQWVRSIDVLGDYIISGSHDTTLRLTHWPSGNGLSVGTGHEFPIEKVKFIHFIEDSPEIRFRTPSTDRYKNWGMQYCVSASRDRTIKIWEIPLPTLMAHRAPIPNPTDSNFRCVLTLKGHLSWVRDISIRGQYLFSCADDKSVRCWDLNTGQCLHVWEKLHTGFVNCLDLDVDFDSNVTPRQMMVTGGLDCKSNVFMR</sequence>
<feature type="chain" id="PRO_0000405103" description="Nuclear distribution protein PAC1">
    <location>
        <begin position="1"/>
        <end position="494"/>
    </location>
</feature>
<feature type="domain" description="LisH" evidence="1">
    <location>
        <begin position="14"/>
        <end position="46"/>
    </location>
</feature>
<feature type="repeat" description="WD 1">
    <location>
        <begin position="153"/>
        <end position="192"/>
    </location>
</feature>
<feature type="repeat" description="WD 2">
    <location>
        <begin position="196"/>
        <end position="244"/>
    </location>
</feature>
<feature type="repeat" description="WD 3">
    <location>
        <begin position="251"/>
        <end position="292"/>
    </location>
</feature>
<feature type="repeat" description="WD 4">
    <location>
        <begin position="295"/>
        <end position="334"/>
    </location>
</feature>
<feature type="repeat" description="WD 5">
    <location>
        <begin position="347"/>
        <end position="395"/>
    </location>
</feature>
<feature type="repeat" description="WD 6">
    <location>
        <begin position="415"/>
        <end position="454"/>
    </location>
</feature>
<feature type="repeat" description="WD 7">
    <location>
        <begin position="457"/>
        <end position="492"/>
    </location>
</feature>
<feature type="coiled-coil region" evidence="1">
    <location>
        <begin position="90"/>
        <end position="123"/>
    </location>
</feature>
<evidence type="ECO:0000255" key="1">
    <source>
        <dbReference type="HAMAP-Rule" id="MF_03141"/>
    </source>
</evidence>
<accession>B3LJT5</accession>
<name>LIS1_YEAS1</name>
<organism>
    <name type="scientific">Saccharomyces cerevisiae (strain RM11-1a)</name>
    <name type="common">Baker's yeast</name>
    <dbReference type="NCBI Taxonomy" id="285006"/>
    <lineage>
        <taxon>Eukaryota</taxon>
        <taxon>Fungi</taxon>
        <taxon>Dikarya</taxon>
        <taxon>Ascomycota</taxon>
        <taxon>Saccharomycotina</taxon>
        <taxon>Saccharomycetes</taxon>
        <taxon>Saccharomycetales</taxon>
        <taxon>Saccharomycetaceae</taxon>
        <taxon>Saccharomyces</taxon>
    </lineage>
</organism>
<dbReference type="EMBL" id="CH408045">
    <property type="protein sequence ID" value="EDV10838.1"/>
    <property type="molecule type" value="Genomic_DNA"/>
</dbReference>
<dbReference type="SMR" id="B3LJT5"/>
<dbReference type="TopDownProteomics" id="B3LJT5"/>
<dbReference type="HOGENOM" id="CLU_000288_57_15_1"/>
<dbReference type="OrthoDB" id="39980at4893"/>
<dbReference type="Proteomes" id="UP000008335">
    <property type="component" value="Unassembled WGS sequence"/>
</dbReference>
<dbReference type="GO" id="GO:0005737">
    <property type="term" value="C:cytoplasm"/>
    <property type="evidence" value="ECO:0007669"/>
    <property type="project" value="UniProtKB-UniRule"/>
</dbReference>
<dbReference type="GO" id="GO:0005874">
    <property type="term" value="C:microtubule"/>
    <property type="evidence" value="ECO:0007669"/>
    <property type="project" value="UniProtKB-KW"/>
</dbReference>
<dbReference type="GO" id="GO:0005875">
    <property type="term" value="C:microtubule associated complex"/>
    <property type="evidence" value="ECO:0007669"/>
    <property type="project" value="UniProtKB-UniRule"/>
</dbReference>
<dbReference type="GO" id="GO:0000922">
    <property type="term" value="C:spindle pole"/>
    <property type="evidence" value="ECO:0007669"/>
    <property type="project" value="UniProtKB-SubCell"/>
</dbReference>
<dbReference type="GO" id="GO:0070840">
    <property type="term" value="F:dynein complex binding"/>
    <property type="evidence" value="ECO:0007669"/>
    <property type="project" value="UniProtKB-UniRule"/>
</dbReference>
<dbReference type="GO" id="GO:0051301">
    <property type="term" value="P:cell division"/>
    <property type="evidence" value="ECO:0007669"/>
    <property type="project" value="UniProtKB-KW"/>
</dbReference>
<dbReference type="GO" id="GO:0000132">
    <property type="term" value="P:establishment of mitotic spindle orientation"/>
    <property type="evidence" value="ECO:0007669"/>
    <property type="project" value="UniProtKB-UniRule"/>
</dbReference>
<dbReference type="GO" id="GO:0051012">
    <property type="term" value="P:microtubule sliding"/>
    <property type="evidence" value="ECO:0007669"/>
    <property type="project" value="UniProtKB-UniRule"/>
</dbReference>
<dbReference type="CDD" id="cd00200">
    <property type="entry name" value="WD40"/>
    <property type="match status" value="1"/>
</dbReference>
<dbReference type="FunFam" id="2.130.10.10:FF:000902">
    <property type="entry name" value="Nuclear distribution protein PAC1"/>
    <property type="match status" value="1"/>
</dbReference>
<dbReference type="Gene3D" id="1.20.960.30">
    <property type="match status" value="1"/>
</dbReference>
<dbReference type="Gene3D" id="2.130.10.10">
    <property type="entry name" value="YVTN repeat-like/Quinoprotein amine dehydrogenase"/>
    <property type="match status" value="1"/>
</dbReference>
<dbReference type="HAMAP" id="MF_03141">
    <property type="entry name" value="lis1"/>
    <property type="match status" value="1"/>
</dbReference>
<dbReference type="InterPro" id="IPR017252">
    <property type="entry name" value="Dynein_regulator_LIS1"/>
</dbReference>
<dbReference type="InterPro" id="IPR020472">
    <property type="entry name" value="G-protein_beta_WD-40_rep"/>
</dbReference>
<dbReference type="InterPro" id="IPR037190">
    <property type="entry name" value="LIS1_N"/>
</dbReference>
<dbReference type="InterPro" id="IPR015943">
    <property type="entry name" value="WD40/YVTN_repeat-like_dom_sf"/>
</dbReference>
<dbReference type="InterPro" id="IPR019775">
    <property type="entry name" value="WD40_repeat_CS"/>
</dbReference>
<dbReference type="InterPro" id="IPR036322">
    <property type="entry name" value="WD40_repeat_dom_sf"/>
</dbReference>
<dbReference type="InterPro" id="IPR001680">
    <property type="entry name" value="WD40_rpt"/>
</dbReference>
<dbReference type="PANTHER" id="PTHR19848:SF8">
    <property type="entry name" value="F-BOX AND WD REPEAT DOMAIN CONTAINING 7"/>
    <property type="match status" value="1"/>
</dbReference>
<dbReference type="PANTHER" id="PTHR19848">
    <property type="entry name" value="WD40 REPEAT PROTEIN"/>
    <property type="match status" value="1"/>
</dbReference>
<dbReference type="Pfam" id="PF00400">
    <property type="entry name" value="WD40"/>
    <property type="match status" value="4"/>
</dbReference>
<dbReference type="PIRSF" id="PIRSF037647">
    <property type="entry name" value="Dynein_regulator_Lis1"/>
    <property type="match status" value="1"/>
</dbReference>
<dbReference type="PRINTS" id="PR00320">
    <property type="entry name" value="GPROTEINBRPT"/>
</dbReference>
<dbReference type="SMART" id="SM00320">
    <property type="entry name" value="WD40"/>
    <property type="match status" value="7"/>
</dbReference>
<dbReference type="SUPFAM" id="SSF109925">
    <property type="entry name" value="Lissencephaly-1 protein (Lis-1, PAF-AH alpha) N-terminal domain"/>
    <property type="match status" value="1"/>
</dbReference>
<dbReference type="SUPFAM" id="SSF50978">
    <property type="entry name" value="WD40 repeat-like"/>
    <property type="match status" value="1"/>
</dbReference>
<dbReference type="PROSITE" id="PS00678">
    <property type="entry name" value="WD_REPEATS_1"/>
    <property type="match status" value="2"/>
</dbReference>
<dbReference type="PROSITE" id="PS50082">
    <property type="entry name" value="WD_REPEATS_2"/>
    <property type="match status" value="2"/>
</dbReference>
<dbReference type="PROSITE" id="PS50294">
    <property type="entry name" value="WD_REPEATS_REGION"/>
    <property type="match status" value="1"/>
</dbReference>
<proteinExistence type="inferred from homology"/>
<keyword id="KW-0131">Cell cycle</keyword>
<keyword id="KW-0132">Cell division</keyword>
<keyword id="KW-0175">Coiled coil</keyword>
<keyword id="KW-0963">Cytoplasm</keyword>
<keyword id="KW-0206">Cytoskeleton</keyword>
<keyword id="KW-0493">Microtubule</keyword>
<keyword id="KW-0498">Mitosis</keyword>
<keyword id="KW-0677">Repeat</keyword>
<keyword id="KW-0813">Transport</keyword>
<keyword id="KW-0853">WD repeat</keyword>
<protein>
    <recommendedName>
        <fullName evidence="1">Nuclear distribution protein PAC1</fullName>
    </recommendedName>
    <alternativeName>
        <fullName evidence="1">Lissencephaly-1 homolog</fullName>
        <shortName evidence="1">LIS-1</shortName>
    </alternativeName>
    <alternativeName>
        <fullName evidence="1">nudF homolog</fullName>
    </alternativeName>
</protein>
<comment type="function">
    <text evidence="1">Positively regulates the activity of the minus-end directed microtubule motor protein dynein. Plays a central role in positioning the mitotic spindle at the bud neck during cell division. Targets cytoplasmic dynein to microtubule plus ends, thereby promoting dynein-mediated microtubule sliding along the bud cortex and consequently the movement of the mitotic spindle to the bud neck.</text>
</comment>
<comment type="subunit">
    <text evidence="1">Self-associates. Interacts with NDL1 and dynein.</text>
</comment>
<comment type="subcellular location">
    <subcellularLocation>
        <location evidence="1">Cytoplasm</location>
        <location evidence="1">Cytoskeleton</location>
    </subcellularLocation>
    <subcellularLocation>
        <location evidence="1">Cytoplasm</location>
        <location evidence="1">Cytoskeleton</location>
        <location evidence="1">Spindle pole</location>
    </subcellularLocation>
    <text evidence="1">Localizes to the plus ends of microtubules and the mitotic spindle poles.</text>
</comment>
<comment type="domain">
    <text evidence="1">Dimerization mediated by the LisH domain may be required to activate dynein.</text>
</comment>
<comment type="similarity">
    <text evidence="1">Belongs to the WD repeat LIS1/nudF family.</text>
</comment>
<gene>
    <name evidence="1" type="primary">PAC1</name>
    <name evidence="1" type="synonym">LIS1</name>
    <name type="ORF">SCRG_01651</name>
</gene>